<name>HPDS_CLODR</name>
<protein>
    <recommendedName>
        <fullName evidence="1">4-hydroxyphenylacetate decarboxylase small subunit</fullName>
        <shortName evidence="1">HPA decarboxylase small subunit</shortName>
        <ecNumber evidence="1">4.1.1.83</ecNumber>
    </recommendedName>
    <alternativeName>
        <fullName evidence="1">4-hydroxyphenylacetate decarboxylase gamma subunit</fullName>
    </alternativeName>
    <alternativeName>
        <fullName evidence="1">p-hydroxyphenylacetate decarboxylase small subunit</fullName>
    </alternativeName>
</protein>
<keyword id="KW-0004">4Fe-4S</keyword>
<keyword id="KW-0408">Iron</keyword>
<keyword id="KW-0411">Iron-sulfur</keyword>
<keyword id="KW-0456">Lyase</keyword>
<keyword id="KW-0479">Metal-binding</keyword>
<feature type="chain" id="PRO_0000403695" description="4-hydroxyphenylacetate decarboxylase small subunit">
    <location>
        <begin position="1"/>
        <end position="85"/>
    </location>
</feature>
<feature type="binding site" evidence="1">
    <location>
        <position position="4"/>
    </location>
    <ligand>
        <name>[4Fe-4S] cluster</name>
        <dbReference type="ChEBI" id="CHEBI:49883"/>
        <label>1</label>
    </ligand>
</feature>
<feature type="binding site" evidence="1">
    <location>
        <position position="7"/>
    </location>
    <ligand>
        <name>[4Fe-4S] cluster</name>
        <dbReference type="ChEBI" id="CHEBI:49883"/>
        <label>1</label>
    </ligand>
</feature>
<feature type="binding site" evidence="1">
    <location>
        <position position="20"/>
    </location>
    <ligand>
        <name>[4Fe-4S] cluster</name>
        <dbReference type="ChEBI" id="CHEBI:49883"/>
        <label>1</label>
    </ligand>
</feature>
<feature type="binding site" evidence="1">
    <location>
        <position position="34"/>
    </location>
    <ligand>
        <name>[4Fe-4S] cluster</name>
        <dbReference type="ChEBI" id="CHEBI:49883"/>
        <label>1</label>
    </ligand>
</feature>
<feature type="binding site" evidence="1">
    <location>
        <position position="43"/>
    </location>
    <ligand>
        <name>[4Fe-4S] cluster</name>
        <dbReference type="ChEBI" id="CHEBI:49883"/>
        <label>2</label>
    </ligand>
</feature>
<feature type="binding site" evidence="1">
    <location>
        <position position="46"/>
    </location>
    <ligand>
        <name>[4Fe-4S] cluster</name>
        <dbReference type="ChEBI" id="CHEBI:49883"/>
        <label>2</label>
    </ligand>
</feature>
<feature type="binding site" evidence="1">
    <location>
        <position position="60"/>
    </location>
    <ligand>
        <name>[4Fe-4S] cluster</name>
        <dbReference type="ChEBI" id="CHEBI:49883"/>
        <label>2</label>
    </ligand>
</feature>
<feature type="binding site" evidence="1">
    <location>
        <position position="78"/>
    </location>
    <ligand>
        <name>[4Fe-4S] cluster</name>
        <dbReference type="ChEBI" id="CHEBI:49883"/>
        <label>2</label>
    </ligand>
</feature>
<sequence>MRKHSDCMNFCAVDATKGICRLSKQMINLDDSACPEIKVMPKCKNCKNFVEANDEGIGKCVGLEKEDWVYSTLNAITCEGHVFNE</sequence>
<comment type="function">
    <text evidence="1 2">Component of the HPA decarboxylase that decarboxylates phenylacetates with a hydroxyl group in the p-position. Active toward 4-hydroxyphenylacetate and 3,4-dihydroxyphenylacetate, forming 4-methylphenol and 4-methylcatechol, respectively. Is likely involved in the catabolism of aromatic amino acids such as tyrosine fermentation. 4-methylphenol (p-cresol) formation provides metabolic toxicity, which allows an active suppression of other microbes and may provide growth advantages for the producers in highly competitive environments (By similarity). The small subunit is essential for enzymatic activity of HPA decarboxylase, and also seems to be involved in the regulation of the enzyme oligomeric state and catalytic activity (By similarity).</text>
</comment>
<comment type="catalytic activity">
    <reaction evidence="1">
        <text>4-hydroxyphenylacetate + H(+) = 4-methylphenol + CO2</text>
        <dbReference type="Rhea" id="RHEA:22732"/>
        <dbReference type="ChEBI" id="CHEBI:15378"/>
        <dbReference type="ChEBI" id="CHEBI:16526"/>
        <dbReference type="ChEBI" id="CHEBI:17847"/>
        <dbReference type="ChEBI" id="CHEBI:48999"/>
        <dbReference type="EC" id="4.1.1.83"/>
    </reaction>
    <physiologicalReaction direction="left-to-right" evidence="1">
        <dbReference type="Rhea" id="RHEA:22733"/>
    </physiologicalReaction>
</comment>
<comment type="catalytic activity">
    <reaction evidence="1">
        <text>3,4-dihydroxyphenylacetate + H(+) = 4-methylcatechol + CO2</text>
        <dbReference type="Rhea" id="RHEA:62556"/>
        <dbReference type="ChEBI" id="CHEBI:15378"/>
        <dbReference type="ChEBI" id="CHEBI:16526"/>
        <dbReference type="ChEBI" id="CHEBI:17254"/>
        <dbReference type="ChEBI" id="CHEBI:17612"/>
        <dbReference type="EC" id="4.1.1.83"/>
    </reaction>
    <physiologicalReaction direction="left-to-right" evidence="1">
        <dbReference type="Rhea" id="RHEA:62557"/>
    </physiologicalReaction>
</comment>
<comment type="cofactor">
    <cofactor evidence="1">
        <name>[4Fe-4S] cluster</name>
        <dbReference type="ChEBI" id="CHEBI:49883"/>
    </cofactor>
    <text evidence="1">Binds 2 [4Fe-4S] clusters per subunit.</text>
</comment>
<comment type="subunit">
    <text evidence="1">Heterooctamer consisting of 4 large (HpdB) subunits and 4 small (HpdC) subunits, arranged as a tetramer of heterodimers.</text>
</comment>
<comment type="similarity">
    <text evidence="3">Belongs to the HPA decarboxylase small subunit family.</text>
</comment>
<gene>
    <name evidence="4" type="primary">hpdC</name>
    <name type="ordered locus">CDR20291_0153</name>
</gene>
<proteinExistence type="inferred from homology"/>
<dbReference type="EC" id="4.1.1.83" evidence="1"/>
<dbReference type="EMBL" id="FN545816">
    <property type="protein sequence ID" value="CBE01728.1"/>
    <property type="molecule type" value="Genomic_DNA"/>
</dbReference>
<dbReference type="RefSeq" id="WP_009888000.1">
    <property type="nucleotide sequence ID" value="NZ_CP115183.1"/>
</dbReference>
<dbReference type="SMR" id="C9YHW2"/>
<dbReference type="KEGG" id="cdl:CDR20291_0153"/>
<dbReference type="HOGENOM" id="CLU_187388_0_0_9"/>
<dbReference type="Proteomes" id="UP000002070">
    <property type="component" value="Chromosome"/>
</dbReference>
<dbReference type="GO" id="GO:0051539">
    <property type="term" value="F:4 iron, 4 sulfur cluster binding"/>
    <property type="evidence" value="ECO:0007669"/>
    <property type="project" value="UniProtKB-KW"/>
</dbReference>
<dbReference type="GO" id="GO:0043722">
    <property type="term" value="F:4-hydroxyphenylacetate decarboxylase activity"/>
    <property type="evidence" value="ECO:0007669"/>
    <property type="project" value="UniProtKB-EC"/>
</dbReference>
<dbReference type="GO" id="GO:0046872">
    <property type="term" value="F:metal ion binding"/>
    <property type="evidence" value="ECO:0007669"/>
    <property type="project" value="UniProtKB-KW"/>
</dbReference>
<dbReference type="Gene3D" id="2.20.70.100">
    <property type="match status" value="2"/>
</dbReference>
<dbReference type="InterPro" id="IPR041125">
    <property type="entry name" value="4HPAD_g_N"/>
</dbReference>
<dbReference type="InterPro" id="IPR053727">
    <property type="entry name" value="HPA_decarboxylase_ss_sf"/>
</dbReference>
<dbReference type="InterPro" id="IPR040923">
    <property type="entry name" value="HpdC_C"/>
</dbReference>
<dbReference type="NCBIfam" id="NF033716">
    <property type="entry name" value="glycyl_HPDL_Sma"/>
    <property type="match status" value="1"/>
</dbReference>
<dbReference type="Pfam" id="PF18671">
    <property type="entry name" value="4HPAD_g_N"/>
    <property type="match status" value="1"/>
</dbReference>
<dbReference type="Pfam" id="PF18524">
    <property type="entry name" value="HPIP_like"/>
    <property type="match status" value="1"/>
</dbReference>
<accession>C9YHW2</accession>
<reference key="1">
    <citation type="journal article" date="2009" name="Genome Biol.">
        <title>Comparative genome and phenotypic analysis of Clostridium difficile 027 strains provides insight into the evolution of a hypervirulent bacterium.</title>
        <authorList>
            <person name="Stabler R.A."/>
            <person name="He M."/>
            <person name="Dawson L."/>
            <person name="Martin M."/>
            <person name="Valiente E."/>
            <person name="Corton C."/>
            <person name="Lawley T.D."/>
            <person name="Sebaihia M."/>
            <person name="Quail M.A."/>
            <person name="Rose G."/>
            <person name="Gerding D.N."/>
            <person name="Gibert M."/>
            <person name="Popoff M.R."/>
            <person name="Parkhill J."/>
            <person name="Dougan G."/>
            <person name="Wren B.W."/>
        </authorList>
    </citation>
    <scope>NUCLEOTIDE SEQUENCE [LARGE SCALE GENOMIC DNA]</scope>
    <source>
        <strain>R20291</strain>
    </source>
</reference>
<organism>
    <name type="scientific">Clostridioides difficile (strain R20291)</name>
    <name type="common">Peptoclostridium difficile</name>
    <dbReference type="NCBI Taxonomy" id="645463"/>
    <lineage>
        <taxon>Bacteria</taxon>
        <taxon>Bacillati</taxon>
        <taxon>Bacillota</taxon>
        <taxon>Clostridia</taxon>
        <taxon>Peptostreptococcales</taxon>
        <taxon>Peptostreptococcaceae</taxon>
        <taxon>Clostridioides</taxon>
    </lineage>
</organism>
<evidence type="ECO:0000250" key="1">
    <source>
        <dbReference type="UniProtKB" id="Q38HX3"/>
    </source>
</evidence>
<evidence type="ECO:0000250" key="2">
    <source>
        <dbReference type="UniProtKB" id="Q84F15"/>
    </source>
</evidence>
<evidence type="ECO:0000305" key="3"/>
<evidence type="ECO:0000312" key="4">
    <source>
        <dbReference type="EMBL" id="CBE01728.1"/>
    </source>
</evidence>